<organism>
    <name type="scientific">Mus musculus</name>
    <name type="common">Mouse</name>
    <dbReference type="NCBI Taxonomy" id="10090"/>
    <lineage>
        <taxon>Eukaryota</taxon>
        <taxon>Metazoa</taxon>
        <taxon>Chordata</taxon>
        <taxon>Craniata</taxon>
        <taxon>Vertebrata</taxon>
        <taxon>Euteleostomi</taxon>
        <taxon>Mammalia</taxon>
        <taxon>Eutheria</taxon>
        <taxon>Euarchontoglires</taxon>
        <taxon>Glires</taxon>
        <taxon>Rodentia</taxon>
        <taxon>Myomorpha</taxon>
        <taxon>Muroidea</taxon>
        <taxon>Muridae</taxon>
        <taxon>Murinae</taxon>
        <taxon>Mus</taxon>
        <taxon>Mus</taxon>
    </lineage>
</organism>
<name>PRR32_MOUSE</name>
<accession>A2AFE9</accession>
<accession>Q9D0W7</accession>
<reference key="1">
    <citation type="journal article" date="2009" name="PLoS Biol.">
        <title>Lineage-specific biology revealed by a finished genome assembly of the mouse.</title>
        <authorList>
            <person name="Church D.M."/>
            <person name="Goodstadt L."/>
            <person name="Hillier L.W."/>
            <person name="Zody M.C."/>
            <person name="Goldstein S."/>
            <person name="She X."/>
            <person name="Bult C.J."/>
            <person name="Agarwala R."/>
            <person name="Cherry J.L."/>
            <person name="DiCuccio M."/>
            <person name="Hlavina W."/>
            <person name="Kapustin Y."/>
            <person name="Meric P."/>
            <person name="Maglott D."/>
            <person name="Birtle Z."/>
            <person name="Marques A.C."/>
            <person name="Graves T."/>
            <person name="Zhou S."/>
            <person name="Teague B."/>
            <person name="Potamousis K."/>
            <person name="Churas C."/>
            <person name="Place M."/>
            <person name="Herschleb J."/>
            <person name="Runnheim R."/>
            <person name="Forrest D."/>
            <person name="Amos-Landgraf J."/>
            <person name="Schwartz D.C."/>
            <person name="Cheng Z."/>
            <person name="Lindblad-Toh K."/>
            <person name="Eichler E.E."/>
            <person name="Ponting C.P."/>
        </authorList>
    </citation>
    <scope>NUCLEOTIDE SEQUENCE [LARGE SCALE GENOMIC DNA]</scope>
    <source>
        <strain>C57BL/6J</strain>
    </source>
</reference>
<reference key="2">
    <citation type="journal article" date="2005" name="Science">
        <title>The transcriptional landscape of the mammalian genome.</title>
        <authorList>
            <person name="Carninci P."/>
            <person name="Kasukawa T."/>
            <person name="Katayama S."/>
            <person name="Gough J."/>
            <person name="Frith M.C."/>
            <person name="Maeda N."/>
            <person name="Oyama R."/>
            <person name="Ravasi T."/>
            <person name="Lenhard B."/>
            <person name="Wells C."/>
            <person name="Kodzius R."/>
            <person name="Shimokawa K."/>
            <person name="Bajic V.B."/>
            <person name="Brenner S.E."/>
            <person name="Batalov S."/>
            <person name="Forrest A.R."/>
            <person name="Zavolan M."/>
            <person name="Davis M.J."/>
            <person name="Wilming L.G."/>
            <person name="Aidinis V."/>
            <person name="Allen J.E."/>
            <person name="Ambesi-Impiombato A."/>
            <person name="Apweiler R."/>
            <person name="Aturaliya R.N."/>
            <person name="Bailey T.L."/>
            <person name="Bansal M."/>
            <person name="Baxter L."/>
            <person name="Beisel K.W."/>
            <person name="Bersano T."/>
            <person name="Bono H."/>
            <person name="Chalk A.M."/>
            <person name="Chiu K.P."/>
            <person name="Choudhary V."/>
            <person name="Christoffels A."/>
            <person name="Clutterbuck D.R."/>
            <person name="Crowe M.L."/>
            <person name="Dalla E."/>
            <person name="Dalrymple B.P."/>
            <person name="de Bono B."/>
            <person name="Della Gatta G."/>
            <person name="di Bernardo D."/>
            <person name="Down T."/>
            <person name="Engstrom P."/>
            <person name="Fagiolini M."/>
            <person name="Faulkner G."/>
            <person name="Fletcher C.F."/>
            <person name="Fukushima T."/>
            <person name="Furuno M."/>
            <person name="Futaki S."/>
            <person name="Gariboldi M."/>
            <person name="Georgii-Hemming P."/>
            <person name="Gingeras T.R."/>
            <person name="Gojobori T."/>
            <person name="Green R.E."/>
            <person name="Gustincich S."/>
            <person name="Harbers M."/>
            <person name="Hayashi Y."/>
            <person name="Hensch T.K."/>
            <person name="Hirokawa N."/>
            <person name="Hill D."/>
            <person name="Huminiecki L."/>
            <person name="Iacono M."/>
            <person name="Ikeo K."/>
            <person name="Iwama A."/>
            <person name="Ishikawa T."/>
            <person name="Jakt M."/>
            <person name="Kanapin A."/>
            <person name="Katoh M."/>
            <person name="Kawasawa Y."/>
            <person name="Kelso J."/>
            <person name="Kitamura H."/>
            <person name="Kitano H."/>
            <person name="Kollias G."/>
            <person name="Krishnan S.P."/>
            <person name="Kruger A."/>
            <person name="Kummerfeld S.K."/>
            <person name="Kurochkin I.V."/>
            <person name="Lareau L.F."/>
            <person name="Lazarevic D."/>
            <person name="Lipovich L."/>
            <person name="Liu J."/>
            <person name="Liuni S."/>
            <person name="McWilliam S."/>
            <person name="Madan Babu M."/>
            <person name="Madera M."/>
            <person name="Marchionni L."/>
            <person name="Matsuda H."/>
            <person name="Matsuzawa S."/>
            <person name="Miki H."/>
            <person name="Mignone F."/>
            <person name="Miyake S."/>
            <person name="Morris K."/>
            <person name="Mottagui-Tabar S."/>
            <person name="Mulder N."/>
            <person name="Nakano N."/>
            <person name="Nakauchi H."/>
            <person name="Ng P."/>
            <person name="Nilsson R."/>
            <person name="Nishiguchi S."/>
            <person name="Nishikawa S."/>
            <person name="Nori F."/>
            <person name="Ohara O."/>
            <person name="Okazaki Y."/>
            <person name="Orlando V."/>
            <person name="Pang K.C."/>
            <person name="Pavan W.J."/>
            <person name="Pavesi G."/>
            <person name="Pesole G."/>
            <person name="Petrovsky N."/>
            <person name="Piazza S."/>
            <person name="Reed J."/>
            <person name="Reid J.F."/>
            <person name="Ring B.Z."/>
            <person name="Ringwald M."/>
            <person name="Rost B."/>
            <person name="Ruan Y."/>
            <person name="Salzberg S.L."/>
            <person name="Sandelin A."/>
            <person name="Schneider C."/>
            <person name="Schoenbach C."/>
            <person name="Sekiguchi K."/>
            <person name="Semple C.A."/>
            <person name="Seno S."/>
            <person name="Sessa L."/>
            <person name="Sheng Y."/>
            <person name="Shibata Y."/>
            <person name="Shimada H."/>
            <person name="Shimada K."/>
            <person name="Silva D."/>
            <person name="Sinclair B."/>
            <person name="Sperling S."/>
            <person name="Stupka E."/>
            <person name="Sugiura K."/>
            <person name="Sultana R."/>
            <person name="Takenaka Y."/>
            <person name="Taki K."/>
            <person name="Tammoja K."/>
            <person name="Tan S.L."/>
            <person name="Tang S."/>
            <person name="Taylor M.S."/>
            <person name="Tegner J."/>
            <person name="Teichmann S.A."/>
            <person name="Ueda H.R."/>
            <person name="van Nimwegen E."/>
            <person name="Verardo R."/>
            <person name="Wei C.L."/>
            <person name="Yagi K."/>
            <person name="Yamanishi H."/>
            <person name="Zabarovsky E."/>
            <person name="Zhu S."/>
            <person name="Zimmer A."/>
            <person name="Hide W."/>
            <person name="Bult C."/>
            <person name="Grimmond S.M."/>
            <person name="Teasdale R.D."/>
            <person name="Liu E.T."/>
            <person name="Brusic V."/>
            <person name="Quackenbush J."/>
            <person name="Wahlestedt C."/>
            <person name="Mattick J.S."/>
            <person name="Hume D.A."/>
            <person name="Kai C."/>
            <person name="Sasaki D."/>
            <person name="Tomaru Y."/>
            <person name="Fukuda S."/>
            <person name="Kanamori-Katayama M."/>
            <person name="Suzuki M."/>
            <person name="Aoki J."/>
            <person name="Arakawa T."/>
            <person name="Iida J."/>
            <person name="Imamura K."/>
            <person name="Itoh M."/>
            <person name="Kato T."/>
            <person name="Kawaji H."/>
            <person name="Kawagashira N."/>
            <person name="Kawashima T."/>
            <person name="Kojima M."/>
            <person name="Kondo S."/>
            <person name="Konno H."/>
            <person name="Nakano K."/>
            <person name="Ninomiya N."/>
            <person name="Nishio T."/>
            <person name="Okada M."/>
            <person name="Plessy C."/>
            <person name="Shibata K."/>
            <person name="Shiraki T."/>
            <person name="Suzuki S."/>
            <person name="Tagami M."/>
            <person name="Waki K."/>
            <person name="Watahiki A."/>
            <person name="Okamura-Oho Y."/>
            <person name="Suzuki H."/>
            <person name="Kawai J."/>
            <person name="Hayashizaki Y."/>
        </authorList>
    </citation>
    <scope>NUCLEOTIDE SEQUENCE [LARGE SCALE MRNA] OF 14-284</scope>
    <source>
        <strain>C57BL/6J</strain>
    </source>
</reference>
<evidence type="ECO:0000256" key="1">
    <source>
        <dbReference type="SAM" id="MobiDB-lite"/>
    </source>
</evidence>
<evidence type="ECO:0000305" key="2"/>
<dbReference type="EMBL" id="AL672081">
    <property type="status" value="NOT_ANNOTATED_CDS"/>
    <property type="molecule type" value="Genomic_DNA"/>
</dbReference>
<dbReference type="EMBL" id="AK004321">
    <property type="protein sequence ID" value="BAB23262.1"/>
    <property type="status" value="ALT_INIT"/>
    <property type="molecule type" value="mRNA"/>
</dbReference>
<dbReference type="CCDS" id="CCDS53063.1"/>
<dbReference type="RefSeq" id="NP_081117.1">
    <property type="nucleotide sequence ID" value="NM_026841.2"/>
</dbReference>
<dbReference type="FunCoup" id="A2AFE9">
    <property type="interactions" value="1"/>
</dbReference>
<dbReference type="STRING" id="10090.ENSMUSP00000038655"/>
<dbReference type="PhosphoSitePlus" id="A2AFE9"/>
<dbReference type="PaxDb" id="10090-ENSMUSP00000038655"/>
<dbReference type="ProteomicsDB" id="291818"/>
<dbReference type="Antibodypedia" id="57821">
    <property type="antibodies" value="4 antibodies from 4 providers"/>
</dbReference>
<dbReference type="Ensembl" id="ENSMUST00000040002.4">
    <property type="protein sequence ID" value="ENSMUSP00000038655.4"/>
    <property type="gene ID" value="ENSMUSG00000037086.4"/>
</dbReference>
<dbReference type="GeneID" id="68800"/>
<dbReference type="KEGG" id="mmu:68800"/>
<dbReference type="UCSC" id="uc009tbi.1">
    <property type="organism name" value="mouse"/>
</dbReference>
<dbReference type="AGR" id="MGI:1916050"/>
<dbReference type="CTD" id="100130613"/>
<dbReference type="MGI" id="MGI:1916050">
    <property type="gene designation" value="Prr32"/>
</dbReference>
<dbReference type="VEuPathDB" id="HostDB:ENSMUSG00000037086"/>
<dbReference type="eggNOG" id="ENOG502T9EE">
    <property type="taxonomic scope" value="Eukaryota"/>
</dbReference>
<dbReference type="GeneTree" id="ENSGT00390000012726"/>
<dbReference type="HOGENOM" id="CLU_933713_0_0_1"/>
<dbReference type="InParanoid" id="A2AFE9"/>
<dbReference type="OMA" id="HCFIPPR"/>
<dbReference type="OrthoDB" id="9802133at2759"/>
<dbReference type="TreeFam" id="TF338131"/>
<dbReference type="BioGRID-ORCS" id="68800">
    <property type="hits" value="2 hits in 78 CRISPR screens"/>
</dbReference>
<dbReference type="ChiTaRS" id="Prr32">
    <property type="organism name" value="mouse"/>
</dbReference>
<dbReference type="PRO" id="PR:A2AFE9"/>
<dbReference type="Proteomes" id="UP000000589">
    <property type="component" value="Chromosome X"/>
</dbReference>
<dbReference type="RNAct" id="A2AFE9">
    <property type="molecule type" value="protein"/>
</dbReference>
<dbReference type="Bgee" id="ENSMUSG00000037086">
    <property type="expression patterns" value="Expressed in choroid plexus epithelium and 59 other cell types or tissues"/>
</dbReference>
<dbReference type="InterPro" id="IPR027891">
    <property type="entry name" value="DUF4645"/>
</dbReference>
<dbReference type="PANTHER" id="PTHR37343">
    <property type="entry name" value="PROLINE-RICH PROTEIN 32"/>
    <property type="match status" value="1"/>
</dbReference>
<dbReference type="PANTHER" id="PTHR37343:SF1">
    <property type="entry name" value="PROLINE-RICH PROTEIN 32"/>
    <property type="match status" value="1"/>
</dbReference>
<dbReference type="Pfam" id="PF15488">
    <property type="entry name" value="DUF4645"/>
    <property type="match status" value="1"/>
</dbReference>
<gene>
    <name type="primary">Prr32</name>
</gene>
<protein>
    <recommendedName>
        <fullName>Proline-rich protein 32</fullName>
    </recommendedName>
</protein>
<sequence>MACTENGLAGHSHSPIIVPVDKNRSKETCHNVQLRSLSSMLKDDEDDADVWTRPPVSLRPPFNVPRTGARIPQNPRAPRHPLTLTPAIEEESLATAEINSSEGLESQSQKGHDSINMSQEFSGSPMALMIGGPRVGSRVLERSGNNSKPYIPVPRSQGFFPPRGSQSRGPPYIPTLRSGIMMEVTPGNARMANRGNMAHVSFPLGSPRHPMDNWQQSPSLPLSPSITGLPCSSAHCFLPPQAPAFNPFPVMPTAFASPLRFGPPLLPYVFHYNTGAMYPPPYLN</sequence>
<proteinExistence type="evidence at transcript level"/>
<feature type="chain" id="PRO_0000336103" description="Proline-rich protein 32">
    <location>
        <begin position="1"/>
        <end position="284"/>
    </location>
</feature>
<feature type="region of interest" description="Disordered" evidence="1">
    <location>
        <begin position="59"/>
        <end position="80"/>
    </location>
</feature>
<feature type="region of interest" description="Disordered" evidence="1">
    <location>
        <begin position="97"/>
        <end position="119"/>
    </location>
</feature>
<feature type="region of interest" description="Disordered" evidence="1">
    <location>
        <begin position="143"/>
        <end position="171"/>
    </location>
</feature>
<comment type="sequence caution" evidence="2">
    <conflict type="erroneous initiation">
        <sequence resource="EMBL-CDS" id="BAB23262"/>
    </conflict>
</comment>
<keyword id="KW-1185">Reference proteome</keyword>